<sequence>MATGDLKRSLRNLEQVLRLLNYPEEVDCVGLIKGDPAASLPIISYSFTSYSPYVTELIMESNVELIAKNDLRFIDAVYKLLRDQFNYKPILTKKQFIQCGFAEWKIQIVCDILNCVMKKHKELSSLQKIPSQQRKKISSGKSEPPLGNEKISAEAVGVDISGRFMTSGKKKAVVIRHLYNEDNVDISEDTLSPITDVNEAVDVSDLNATEIKMPEVKVPEIKAEQQDVNVNPEITALQTMLAECQENLKKLTSIEKRLDCLEQKMKGKVMVDENTWTNLLSRVTLLETEMLLSKKNDEFIEFNEVSEDYASCSDMDLLNPHRKSEVERPASIPLSSGYSTASSDSTPRASTVNYCGLNEISEETTIQKMERMKKMFEETAELLKCPNHYL</sequence>
<evidence type="ECO:0000255" key="1"/>
<evidence type="ECO:0000256" key="2">
    <source>
        <dbReference type="SAM" id="MobiDB-lite"/>
    </source>
</evidence>
<evidence type="ECO:0000269" key="3">
    <source>
    </source>
</evidence>
<evidence type="ECO:0000269" key="4">
    <source>
    </source>
</evidence>
<evidence type="ECO:0000269" key="5">
    <source>
    </source>
</evidence>
<evidence type="ECO:0000269" key="6">
    <source>
    </source>
</evidence>
<evidence type="ECO:0000269" key="7">
    <source>
    </source>
</evidence>
<evidence type="ECO:0000303" key="8">
    <source>
    </source>
</evidence>
<evidence type="ECO:0000305" key="9"/>
<evidence type="ECO:0007744" key="10">
    <source>
    </source>
</evidence>
<evidence type="ECO:0007744" key="11">
    <source>
    </source>
</evidence>
<evidence type="ECO:0007829" key="12">
    <source>
        <dbReference type="PDB" id="7PT5"/>
    </source>
</evidence>
<accession>Q9C0F1</accession>
<accession>A8K8W9</accession>
<accession>A8MW11</accession>
<accession>B3KT53</accession>
<accession>D3DP42</accession>
<accession>Q8IXZ4</accession>
<feature type="chain" id="PRO_0000293722" description="Centrosomal protein of 44 kDa">
    <location>
        <begin position="1"/>
        <end position="390"/>
    </location>
</feature>
<feature type="region of interest" description="Binds with microtubules and centrioles" evidence="6">
    <location>
        <begin position="11"/>
        <end position="195"/>
    </location>
</feature>
<feature type="region of interest" description="Disordered" evidence="2">
    <location>
        <begin position="322"/>
        <end position="348"/>
    </location>
</feature>
<feature type="coiled-coil region" evidence="1">
    <location>
        <begin position="233"/>
        <end position="269"/>
    </location>
</feature>
<feature type="coiled-coil region" evidence="1">
    <location>
        <begin position="361"/>
        <end position="385"/>
    </location>
</feature>
<feature type="compositionally biased region" description="Low complexity" evidence="2">
    <location>
        <begin position="335"/>
        <end position="345"/>
    </location>
</feature>
<feature type="modified residue" description="Phosphoserine" evidence="11">
    <location>
        <position position="331"/>
    </location>
</feature>
<feature type="modified residue" description="Phosphoserine" evidence="11">
    <location>
        <position position="345"/>
    </location>
</feature>
<feature type="modified residue" description="Phosphothreonine" evidence="10">
    <location>
        <position position="346"/>
    </location>
</feature>
<feature type="splice variant" id="VSP_041378" description="In isoform 2." evidence="8">
    <original>ETTIQKMERMKKMFEETAELLKCPNHYL</original>
    <variation>NFPAWSATSSCSSLSWLLRGHTSYLSSQSFAWPLSCV</variation>
    <location>
        <begin position="363"/>
        <end position="390"/>
    </location>
</feature>
<feature type="sequence variant" id="VAR_033116" description="In dbSNP:rs4695918." evidence="3 4">
    <original>G</original>
    <variation>S</variation>
    <location>
        <position position="147"/>
    </location>
</feature>
<feature type="mutagenesis site" description="Loss of binding to microtubules and location to centrioles." evidence="7">
    <original>KNDLRFIDAVYKLLRDQFNYK</original>
    <variation>DNDLEFIDAVYDLLDQFNYD</variation>
    <location>
        <begin position="68"/>
        <end position="88"/>
    </location>
</feature>
<feature type="helix" evidence="12">
    <location>
        <begin position="6"/>
        <end position="20"/>
    </location>
</feature>
<feature type="helix" evidence="12">
    <location>
        <begin position="28"/>
        <end position="32"/>
    </location>
</feature>
<feature type="helix" evidence="12">
    <location>
        <begin position="36"/>
        <end position="48"/>
    </location>
</feature>
<feature type="helix" evidence="12">
    <location>
        <begin position="52"/>
        <end position="59"/>
    </location>
</feature>
<feature type="helix" evidence="12">
    <location>
        <begin position="71"/>
        <end position="83"/>
    </location>
</feature>
<feature type="helix" evidence="12">
    <location>
        <begin position="93"/>
        <end position="97"/>
    </location>
</feature>
<feature type="helix" evidence="12">
    <location>
        <begin position="102"/>
        <end position="125"/>
    </location>
</feature>
<reference key="1">
    <citation type="submission" date="2003-10" db="EMBL/GenBank/DDBJ databases">
        <title>Screening and cloning of the target genes transactivated by hepatitis B virus PreS1 protein using suppression subtractive hybridization technique.</title>
        <authorList>
            <person name="Ji D."/>
            <person name="Cheng J."/>
            <person name="Dong J."/>
            <person name="Wang J."/>
            <person name="Liu Y."/>
            <person name="Yang Q."/>
            <person name="Dang X."/>
        </authorList>
    </citation>
    <scope>NUCLEOTIDE SEQUENCE [MRNA] (ISOFORM 1)</scope>
</reference>
<reference key="2">
    <citation type="journal article" date="2000" name="DNA Res.">
        <title>Prediction of the coding sequences of unidentified human genes. XIX. The complete sequences of 100 new cDNA clones from brain which code for large proteins in vitro.</title>
        <authorList>
            <person name="Nagase T."/>
            <person name="Kikuno R."/>
            <person name="Hattori A."/>
            <person name="Kondo Y."/>
            <person name="Okumura K."/>
            <person name="Ohara O."/>
        </authorList>
    </citation>
    <scope>NUCLEOTIDE SEQUENCE [LARGE SCALE MRNA] (ISOFORM 1)</scope>
    <scope>VARIANT SER-147</scope>
    <source>
        <tissue>Brain</tissue>
    </source>
</reference>
<reference key="3">
    <citation type="journal article" date="2004" name="Nat. Genet.">
        <title>Complete sequencing and characterization of 21,243 full-length human cDNAs.</title>
        <authorList>
            <person name="Ota T."/>
            <person name="Suzuki Y."/>
            <person name="Nishikawa T."/>
            <person name="Otsuki T."/>
            <person name="Sugiyama T."/>
            <person name="Irie R."/>
            <person name="Wakamatsu A."/>
            <person name="Hayashi K."/>
            <person name="Sato H."/>
            <person name="Nagai K."/>
            <person name="Kimura K."/>
            <person name="Makita H."/>
            <person name="Sekine M."/>
            <person name="Obayashi M."/>
            <person name="Nishi T."/>
            <person name="Shibahara T."/>
            <person name="Tanaka T."/>
            <person name="Ishii S."/>
            <person name="Yamamoto J."/>
            <person name="Saito K."/>
            <person name="Kawai Y."/>
            <person name="Isono Y."/>
            <person name="Nakamura Y."/>
            <person name="Nagahari K."/>
            <person name="Murakami K."/>
            <person name="Yasuda T."/>
            <person name="Iwayanagi T."/>
            <person name="Wagatsuma M."/>
            <person name="Shiratori A."/>
            <person name="Sudo H."/>
            <person name="Hosoiri T."/>
            <person name="Kaku Y."/>
            <person name="Kodaira H."/>
            <person name="Kondo H."/>
            <person name="Sugawara M."/>
            <person name="Takahashi M."/>
            <person name="Kanda K."/>
            <person name="Yokoi T."/>
            <person name="Furuya T."/>
            <person name="Kikkawa E."/>
            <person name="Omura Y."/>
            <person name="Abe K."/>
            <person name="Kamihara K."/>
            <person name="Katsuta N."/>
            <person name="Sato K."/>
            <person name="Tanikawa M."/>
            <person name="Yamazaki M."/>
            <person name="Ninomiya K."/>
            <person name="Ishibashi T."/>
            <person name="Yamashita H."/>
            <person name="Murakawa K."/>
            <person name="Fujimori K."/>
            <person name="Tanai H."/>
            <person name="Kimata M."/>
            <person name="Watanabe M."/>
            <person name="Hiraoka S."/>
            <person name="Chiba Y."/>
            <person name="Ishida S."/>
            <person name="Ono Y."/>
            <person name="Takiguchi S."/>
            <person name="Watanabe S."/>
            <person name="Yosida M."/>
            <person name="Hotuta T."/>
            <person name="Kusano J."/>
            <person name="Kanehori K."/>
            <person name="Takahashi-Fujii A."/>
            <person name="Hara H."/>
            <person name="Tanase T.-O."/>
            <person name="Nomura Y."/>
            <person name="Togiya S."/>
            <person name="Komai F."/>
            <person name="Hara R."/>
            <person name="Takeuchi K."/>
            <person name="Arita M."/>
            <person name="Imose N."/>
            <person name="Musashino K."/>
            <person name="Yuuki H."/>
            <person name="Oshima A."/>
            <person name="Sasaki N."/>
            <person name="Aotsuka S."/>
            <person name="Yoshikawa Y."/>
            <person name="Matsunawa H."/>
            <person name="Ichihara T."/>
            <person name="Shiohata N."/>
            <person name="Sano S."/>
            <person name="Moriya S."/>
            <person name="Momiyama H."/>
            <person name="Satoh N."/>
            <person name="Takami S."/>
            <person name="Terashima Y."/>
            <person name="Suzuki O."/>
            <person name="Nakagawa S."/>
            <person name="Senoh A."/>
            <person name="Mizoguchi H."/>
            <person name="Goto Y."/>
            <person name="Shimizu F."/>
            <person name="Wakebe H."/>
            <person name="Hishigaki H."/>
            <person name="Watanabe T."/>
            <person name="Sugiyama A."/>
            <person name="Takemoto M."/>
            <person name="Kawakami B."/>
            <person name="Yamazaki M."/>
            <person name="Watanabe K."/>
            <person name="Kumagai A."/>
            <person name="Itakura S."/>
            <person name="Fukuzumi Y."/>
            <person name="Fujimori Y."/>
            <person name="Komiyama M."/>
            <person name="Tashiro H."/>
            <person name="Tanigami A."/>
            <person name="Fujiwara T."/>
            <person name="Ono T."/>
            <person name="Yamada K."/>
            <person name="Fujii Y."/>
            <person name="Ozaki K."/>
            <person name="Hirao M."/>
            <person name="Ohmori Y."/>
            <person name="Kawabata A."/>
            <person name="Hikiji T."/>
            <person name="Kobatake N."/>
            <person name="Inagaki H."/>
            <person name="Ikema Y."/>
            <person name="Okamoto S."/>
            <person name="Okitani R."/>
            <person name="Kawakami T."/>
            <person name="Noguchi S."/>
            <person name="Itoh T."/>
            <person name="Shigeta K."/>
            <person name="Senba T."/>
            <person name="Matsumura K."/>
            <person name="Nakajima Y."/>
            <person name="Mizuno T."/>
            <person name="Morinaga M."/>
            <person name="Sasaki M."/>
            <person name="Togashi T."/>
            <person name="Oyama M."/>
            <person name="Hata H."/>
            <person name="Watanabe M."/>
            <person name="Komatsu T."/>
            <person name="Mizushima-Sugano J."/>
            <person name="Satoh T."/>
            <person name="Shirai Y."/>
            <person name="Takahashi Y."/>
            <person name="Nakagawa K."/>
            <person name="Okumura K."/>
            <person name="Nagase T."/>
            <person name="Nomura N."/>
            <person name="Kikuchi H."/>
            <person name="Masuho Y."/>
            <person name="Yamashita R."/>
            <person name="Nakai K."/>
            <person name="Yada T."/>
            <person name="Nakamura Y."/>
            <person name="Ohara O."/>
            <person name="Isogai T."/>
            <person name="Sugano S."/>
        </authorList>
    </citation>
    <scope>NUCLEOTIDE SEQUENCE [LARGE SCALE MRNA] (ISOFORM 2)</scope>
    <scope>VARIANT SER-147</scope>
    <source>
        <tissue>Hippocampus</tissue>
        <tissue>Testis</tissue>
    </source>
</reference>
<reference key="4">
    <citation type="journal article" date="2005" name="Nature">
        <title>Generation and annotation of the DNA sequences of human chromosomes 2 and 4.</title>
        <authorList>
            <person name="Hillier L.W."/>
            <person name="Graves T.A."/>
            <person name="Fulton R.S."/>
            <person name="Fulton L.A."/>
            <person name="Pepin K.H."/>
            <person name="Minx P."/>
            <person name="Wagner-McPherson C."/>
            <person name="Layman D."/>
            <person name="Wylie K."/>
            <person name="Sekhon M."/>
            <person name="Becker M.C."/>
            <person name="Fewell G.A."/>
            <person name="Delehaunty K.D."/>
            <person name="Miner T.L."/>
            <person name="Nash W.E."/>
            <person name="Kremitzki C."/>
            <person name="Oddy L."/>
            <person name="Du H."/>
            <person name="Sun H."/>
            <person name="Bradshaw-Cordum H."/>
            <person name="Ali J."/>
            <person name="Carter J."/>
            <person name="Cordes M."/>
            <person name="Harris A."/>
            <person name="Isak A."/>
            <person name="van Brunt A."/>
            <person name="Nguyen C."/>
            <person name="Du F."/>
            <person name="Courtney L."/>
            <person name="Kalicki J."/>
            <person name="Ozersky P."/>
            <person name="Abbott S."/>
            <person name="Armstrong J."/>
            <person name="Belter E.A."/>
            <person name="Caruso L."/>
            <person name="Cedroni M."/>
            <person name="Cotton M."/>
            <person name="Davidson T."/>
            <person name="Desai A."/>
            <person name="Elliott G."/>
            <person name="Erb T."/>
            <person name="Fronick C."/>
            <person name="Gaige T."/>
            <person name="Haakenson W."/>
            <person name="Haglund K."/>
            <person name="Holmes A."/>
            <person name="Harkins R."/>
            <person name="Kim K."/>
            <person name="Kruchowski S.S."/>
            <person name="Strong C.M."/>
            <person name="Grewal N."/>
            <person name="Goyea E."/>
            <person name="Hou S."/>
            <person name="Levy A."/>
            <person name="Martinka S."/>
            <person name="Mead K."/>
            <person name="McLellan M.D."/>
            <person name="Meyer R."/>
            <person name="Randall-Maher J."/>
            <person name="Tomlinson C."/>
            <person name="Dauphin-Kohlberg S."/>
            <person name="Kozlowicz-Reilly A."/>
            <person name="Shah N."/>
            <person name="Swearengen-Shahid S."/>
            <person name="Snider J."/>
            <person name="Strong J.T."/>
            <person name="Thompson J."/>
            <person name="Yoakum M."/>
            <person name="Leonard S."/>
            <person name="Pearman C."/>
            <person name="Trani L."/>
            <person name="Radionenko M."/>
            <person name="Waligorski J.E."/>
            <person name="Wang C."/>
            <person name="Rock S.M."/>
            <person name="Tin-Wollam A.-M."/>
            <person name="Maupin R."/>
            <person name="Latreille P."/>
            <person name="Wendl M.C."/>
            <person name="Yang S.-P."/>
            <person name="Pohl C."/>
            <person name="Wallis J.W."/>
            <person name="Spieth J."/>
            <person name="Bieri T.A."/>
            <person name="Berkowicz N."/>
            <person name="Nelson J.O."/>
            <person name="Osborne J."/>
            <person name="Ding L."/>
            <person name="Meyer R."/>
            <person name="Sabo A."/>
            <person name="Shotland Y."/>
            <person name="Sinha P."/>
            <person name="Wohldmann P.E."/>
            <person name="Cook L.L."/>
            <person name="Hickenbotham M.T."/>
            <person name="Eldred J."/>
            <person name="Williams D."/>
            <person name="Jones T.A."/>
            <person name="She X."/>
            <person name="Ciccarelli F.D."/>
            <person name="Izaurralde E."/>
            <person name="Taylor J."/>
            <person name="Schmutz J."/>
            <person name="Myers R.M."/>
            <person name="Cox D.R."/>
            <person name="Huang X."/>
            <person name="McPherson J.D."/>
            <person name="Mardis E.R."/>
            <person name="Clifton S.W."/>
            <person name="Warren W.C."/>
            <person name="Chinwalla A.T."/>
            <person name="Eddy S.R."/>
            <person name="Marra M.A."/>
            <person name="Ovcharenko I."/>
            <person name="Furey T.S."/>
            <person name="Miller W."/>
            <person name="Eichler E.E."/>
            <person name="Bork P."/>
            <person name="Suyama M."/>
            <person name="Torrents D."/>
            <person name="Waterston R.H."/>
            <person name="Wilson R.K."/>
        </authorList>
    </citation>
    <scope>NUCLEOTIDE SEQUENCE [LARGE SCALE GENOMIC DNA]</scope>
</reference>
<reference key="5">
    <citation type="submission" date="2005-09" db="EMBL/GenBank/DDBJ databases">
        <authorList>
            <person name="Mural R.J."/>
            <person name="Istrail S."/>
            <person name="Sutton G.G."/>
            <person name="Florea L."/>
            <person name="Halpern A.L."/>
            <person name="Mobarry C.M."/>
            <person name="Lippert R."/>
            <person name="Walenz B."/>
            <person name="Shatkay H."/>
            <person name="Dew I."/>
            <person name="Miller J.R."/>
            <person name="Flanigan M.J."/>
            <person name="Edwards N.J."/>
            <person name="Bolanos R."/>
            <person name="Fasulo D."/>
            <person name="Halldorsson B.V."/>
            <person name="Hannenhalli S."/>
            <person name="Turner R."/>
            <person name="Yooseph S."/>
            <person name="Lu F."/>
            <person name="Nusskern D.R."/>
            <person name="Shue B.C."/>
            <person name="Zheng X.H."/>
            <person name="Zhong F."/>
            <person name="Delcher A.L."/>
            <person name="Huson D.H."/>
            <person name="Kravitz S.A."/>
            <person name="Mouchard L."/>
            <person name="Reinert K."/>
            <person name="Remington K.A."/>
            <person name="Clark A.G."/>
            <person name="Waterman M.S."/>
            <person name="Eichler E.E."/>
            <person name="Adams M.D."/>
            <person name="Hunkapiller M.W."/>
            <person name="Myers E.W."/>
            <person name="Venter J.C."/>
        </authorList>
    </citation>
    <scope>NUCLEOTIDE SEQUENCE [LARGE SCALE GENOMIC DNA]</scope>
</reference>
<reference key="6">
    <citation type="journal article" date="2004" name="Genome Res.">
        <title>The status, quality, and expansion of the NIH full-length cDNA project: the Mammalian Gene Collection (MGC).</title>
        <authorList>
            <consortium name="The MGC Project Team"/>
        </authorList>
    </citation>
    <scope>NUCLEOTIDE SEQUENCE [LARGE SCALE MRNA] (ISOFORM 1)</scope>
    <source>
        <tissue>Testis</tissue>
    </source>
</reference>
<reference key="7">
    <citation type="journal article" date="2008" name="Proc. Natl. Acad. Sci. U.S.A.">
        <title>A quantitative atlas of mitotic phosphorylation.</title>
        <authorList>
            <person name="Dephoure N."/>
            <person name="Zhou C."/>
            <person name="Villen J."/>
            <person name="Beausoleil S.A."/>
            <person name="Bakalarski C.E."/>
            <person name="Elledge S.J."/>
            <person name="Gygi S.P."/>
        </authorList>
    </citation>
    <scope>PHOSPHORYLATION [LARGE SCALE ANALYSIS] AT THR-346</scope>
    <scope>IDENTIFICATION BY MASS SPECTROMETRY [LARGE SCALE ANALYSIS]</scope>
    <source>
        <tissue>Cervix carcinoma</tissue>
    </source>
</reference>
<reference key="8">
    <citation type="journal article" date="2011" name="EMBO J.">
        <title>Novel asymmetrically localizing components of human centrosomes identified by complementary proteomics methods.</title>
        <authorList>
            <person name="Jakobsen L."/>
            <person name="Vanselow K."/>
            <person name="Skogs M."/>
            <person name="Toyoda Y."/>
            <person name="Lundberg E."/>
            <person name="Poser I."/>
            <person name="Falkenby L.G."/>
            <person name="Bennetzen M."/>
            <person name="Westendorf J."/>
            <person name="Nigg E.A."/>
            <person name="Uhlen M."/>
            <person name="Hyman A.A."/>
            <person name="Andersen J.S."/>
        </authorList>
    </citation>
    <scope>IDENTIFICATION BY MASS SPECTROMETRY</scope>
    <scope>SUBCELLULAR LOCATION</scope>
</reference>
<reference key="9">
    <citation type="journal article" date="2012" name="Proc. Natl. Acad. Sci. U.S.A.">
        <title>N-terminal acetylome analyses and functional insights of the N-terminal acetyltransferase NatB.</title>
        <authorList>
            <person name="Van Damme P."/>
            <person name="Lasa M."/>
            <person name="Polevoda B."/>
            <person name="Gazquez C."/>
            <person name="Elosegui-Artola A."/>
            <person name="Kim D.S."/>
            <person name="De Juan-Pardo E."/>
            <person name="Demeyer K."/>
            <person name="Hole K."/>
            <person name="Larrea E."/>
            <person name="Timmerman E."/>
            <person name="Prieto J."/>
            <person name="Arnesen T."/>
            <person name="Sherman F."/>
            <person name="Gevaert K."/>
            <person name="Aldabe R."/>
        </authorList>
    </citation>
    <scope>IDENTIFICATION BY MASS SPECTROMETRY [LARGE SCALE ANALYSIS]</scope>
</reference>
<reference key="10">
    <citation type="journal article" date="2013" name="J. Proteome Res.">
        <title>Toward a comprehensive characterization of a human cancer cell phosphoproteome.</title>
        <authorList>
            <person name="Zhou H."/>
            <person name="Di Palma S."/>
            <person name="Preisinger C."/>
            <person name="Peng M."/>
            <person name="Polat A.N."/>
            <person name="Heck A.J."/>
            <person name="Mohammed S."/>
        </authorList>
    </citation>
    <scope>PHOSPHORYLATION [LARGE SCALE ANALYSIS] AT SER-331 AND SER-345</scope>
    <scope>IDENTIFICATION BY MASS SPECTROMETRY [LARGE SCALE ANALYSIS]</scope>
    <source>
        <tissue>Erythroleukemia</tissue>
    </source>
</reference>
<reference key="11">
    <citation type="journal article" date="2014" name="J. Proteomics">
        <title>An enzyme assisted RP-RPLC approach for in-depth analysis of human liver phosphoproteome.</title>
        <authorList>
            <person name="Bian Y."/>
            <person name="Song C."/>
            <person name="Cheng K."/>
            <person name="Dong M."/>
            <person name="Wang F."/>
            <person name="Huang J."/>
            <person name="Sun D."/>
            <person name="Wang L."/>
            <person name="Ye M."/>
            <person name="Zou H."/>
        </authorList>
    </citation>
    <scope>IDENTIFICATION BY MASS SPECTROMETRY [LARGE SCALE ANALYSIS]</scope>
    <source>
        <tissue>Liver</tissue>
    </source>
</reference>
<reference key="12">
    <citation type="journal article" date="2020" name="J. Cell Sci.">
        <title>Cep44 functions in centrosome cohesion by stabilizing rootletin.</title>
        <authorList>
            <person name="Hossain D."/>
            <person name="Shih S.Y."/>
            <person name="Xiao X."/>
            <person name="White J."/>
            <person name="Tsang W.Y."/>
        </authorList>
    </citation>
    <scope>FUNCTION</scope>
    <scope>SUBCELLULAR LOCATION</scope>
    <scope>INTERACTION WITH CROCC</scope>
    <scope>DEVELOPMENTAL STAGE</scope>
</reference>
<reference key="13">
    <citation type="journal article" date="2020" name="Nat. Commun.">
        <title>CEP44 ensures the formation of bona fide centriole wall, a requirement for the centriole-to-centrosome conversion.</title>
        <authorList>
            <person name="Atorino E.S."/>
            <person name="Hata S."/>
            <person name="Funaya C."/>
            <person name="Neuner A."/>
            <person name="Schiebel E."/>
        </authorList>
    </citation>
    <scope>FUNCTION</scope>
    <scope>SUBCELLULAR LOCATION</scope>
    <scope>INTERACTION WITH POC1B</scope>
    <scope>MUTAGENESIS OF 68-LYS--LYS-88</scope>
</reference>
<gene>
    <name type="primary">CEP44</name>
    <name type="synonym">KIAA1712</name>
</gene>
<keyword id="KW-0002">3D-structure</keyword>
<keyword id="KW-0025">Alternative splicing</keyword>
<keyword id="KW-0175">Coiled coil</keyword>
<keyword id="KW-0963">Cytoplasm</keyword>
<keyword id="KW-0206">Cytoskeleton</keyword>
<keyword id="KW-0597">Phosphoprotein</keyword>
<keyword id="KW-1267">Proteomics identification</keyword>
<keyword id="KW-1185">Reference proteome</keyword>
<proteinExistence type="evidence at protein level"/>
<dbReference type="EMBL" id="AY426674">
    <property type="protein sequence ID" value="AAR88428.1"/>
    <property type="molecule type" value="mRNA"/>
</dbReference>
<dbReference type="EMBL" id="AB051499">
    <property type="protein sequence ID" value="BAB21803.1"/>
    <property type="status" value="ALT_INIT"/>
    <property type="molecule type" value="mRNA"/>
</dbReference>
<dbReference type="EMBL" id="AK094961">
    <property type="protein sequence ID" value="BAG52965.1"/>
    <property type="molecule type" value="mRNA"/>
</dbReference>
<dbReference type="EMBL" id="AK292484">
    <property type="protein sequence ID" value="BAF85173.1"/>
    <property type="molecule type" value="mRNA"/>
</dbReference>
<dbReference type="EMBL" id="AC097653">
    <property type="status" value="NOT_ANNOTATED_CDS"/>
    <property type="molecule type" value="Genomic_DNA"/>
</dbReference>
<dbReference type="EMBL" id="CH471056">
    <property type="protein sequence ID" value="EAX04738.1"/>
    <property type="molecule type" value="Genomic_DNA"/>
</dbReference>
<dbReference type="EMBL" id="CH471056">
    <property type="protein sequence ID" value="EAX04739.1"/>
    <property type="molecule type" value="Genomic_DNA"/>
</dbReference>
<dbReference type="EMBL" id="CH471056">
    <property type="protein sequence ID" value="EAX04740.1"/>
    <property type="molecule type" value="Genomic_DNA"/>
</dbReference>
<dbReference type="EMBL" id="BC038667">
    <property type="protein sequence ID" value="AAH38667.1"/>
    <property type="molecule type" value="mRNA"/>
</dbReference>
<dbReference type="CCDS" id="CCDS34106.1">
    <molecule id="Q9C0F1-1"/>
</dbReference>
<dbReference type="CCDS" id="CCDS47163.1">
    <molecule id="Q9C0F1-2"/>
</dbReference>
<dbReference type="RefSeq" id="NP_001035247.1">
    <molecule id="Q9C0F1-1"/>
    <property type="nucleotide sequence ID" value="NM_001040157.3"/>
</dbReference>
<dbReference type="RefSeq" id="NP_001138786.1">
    <molecule id="Q9C0F1-2"/>
    <property type="nucleotide sequence ID" value="NM_001145314.2"/>
</dbReference>
<dbReference type="RefSeq" id="XP_011530587.1">
    <molecule id="Q9C0F1-2"/>
    <property type="nucleotide sequence ID" value="XM_011532285.3"/>
</dbReference>
<dbReference type="RefSeq" id="XP_011530588.1">
    <molecule id="Q9C0F1-2"/>
    <property type="nucleotide sequence ID" value="XM_011532286.3"/>
</dbReference>
<dbReference type="RefSeq" id="XP_011530589.1">
    <molecule id="Q9C0F1-2"/>
    <property type="nucleotide sequence ID" value="XM_011532287.3"/>
</dbReference>
<dbReference type="RefSeq" id="XP_016864143.1">
    <molecule id="Q9C0F1-1"/>
    <property type="nucleotide sequence ID" value="XM_017008654.2"/>
</dbReference>
<dbReference type="RefSeq" id="XP_016864144.1">
    <molecule id="Q9C0F1-1"/>
    <property type="nucleotide sequence ID" value="XM_017008655.2"/>
</dbReference>
<dbReference type="RefSeq" id="XP_024309997.1">
    <molecule id="Q9C0F1-2"/>
    <property type="nucleotide sequence ID" value="XM_024454229.2"/>
</dbReference>
<dbReference type="RefSeq" id="XP_024309998.1">
    <molecule id="Q9C0F1-2"/>
    <property type="nucleotide sequence ID" value="XM_024454230.2"/>
</dbReference>
<dbReference type="RefSeq" id="XP_024309999.1">
    <molecule id="Q9C0F1-2"/>
    <property type="nucleotide sequence ID" value="XM_024454231.2"/>
</dbReference>
<dbReference type="RefSeq" id="XP_024310000.1">
    <molecule id="Q9C0F1-1"/>
    <property type="nucleotide sequence ID" value="XM_024454232.2"/>
</dbReference>
<dbReference type="RefSeq" id="XP_024310001.1">
    <molecule id="Q9C0F1-1"/>
    <property type="nucleotide sequence ID" value="XM_024454233.2"/>
</dbReference>
<dbReference type="RefSeq" id="XP_047272157.1">
    <molecule id="Q9C0F1-1"/>
    <property type="nucleotide sequence ID" value="XM_047416201.1"/>
</dbReference>
<dbReference type="RefSeq" id="XP_047272158.1">
    <molecule id="Q9C0F1-1"/>
    <property type="nucleotide sequence ID" value="XM_047416202.1"/>
</dbReference>
<dbReference type="RefSeq" id="XP_054206876.1">
    <molecule id="Q9C0F1-2"/>
    <property type="nucleotide sequence ID" value="XM_054350901.1"/>
</dbReference>
<dbReference type="RefSeq" id="XP_054206877.1">
    <molecule id="Q9C0F1-2"/>
    <property type="nucleotide sequence ID" value="XM_054350902.1"/>
</dbReference>
<dbReference type="RefSeq" id="XP_054206878.1">
    <molecule id="Q9C0F1-2"/>
    <property type="nucleotide sequence ID" value="XM_054350903.1"/>
</dbReference>
<dbReference type="RefSeq" id="XP_054206879.1">
    <molecule id="Q9C0F1-2"/>
    <property type="nucleotide sequence ID" value="XM_054350904.1"/>
</dbReference>
<dbReference type="RefSeq" id="XP_054206880.1">
    <molecule id="Q9C0F1-2"/>
    <property type="nucleotide sequence ID" value="XM_054350905.1"/>
</dbReference>
<dbReference type="RefSeq" id="XP_054206881.1">
    <molecule id="Q9C0F1-2"/>
    <property type="nucleotide sequence ID" value="XM_054350906.1"/>
</dbReference>
<dbReference type="RefSeq" id="XP_054206882.1">
    <molecule id="Q9C0F1-1"/>
    <property type="nucleotide sequence ID" value="XM_054350907.1"/>
</dbReference>
<dbReference type="RefSeq" id="XP_054206883.1">
    <molecule id="Q9C0F1-1"/>
    <property type="nucleotide sequence ID" value="XM_054350908.1"/>
</dbReference>
<dbReference type="RefSeq" id="XP_054206884.1">
    <molecule id="Q9C0F1-1"/>
    <property type="nucleotide sequence ID" value="XM_054350909.1"/>
</dbReference>
<dbReference type="RefSeq" id="XP_054206885.1">
    <molecule id="Q9C0F1-1"/>
    <property type="nucleotide sequence ID" value="XM_054350910.1"/>
</dbReference>
<dbReference type="RefSeq" id="XP_054206886.1">
    <molecule id="Q9C0F1-1"/>
    <property type="nucleotide sequence ID" value="XM_054350911.1"/>
</dbReference>
<dbReference type="RefSeq" id="XP_054206887.1">
    <molecule id="Q9C0F1-1"/>
    <property type="nucleotide sequence ID" value="XM_054350912.1"/>
</dbReference>
<dbReference type="PDB" id="7PT5">
    <property type="method" value="X-ray"/>
    <property type="resolution" value="2.30 A"/>
    <property type="chains" value="A=1-140"/>
</dbReference>
<dbReference type="PDBsum" id="7PT5"/>
<dbReference type="SMR" id="Q9C0F1"/>
<dbReference type="BioGRID" id="123315">
    <property type="interactions" value="202"/>
</dbReference>
<dbReference type="FunCoup" id="Q9C0F1">
    <property type="interactions" value="1392"/>
</dbReference>
<dbReference type="IntAct" id="Q9C0F1">
    <property type="interactions" value="165"/>
</dbReference>
<dbReference type="MINT" id="Q9C0F1"/>
<dbReference type="STRING" id="9606.ENSP00000389427"/>
<dbReference type="GlyGen" id="Q9C0F1">
    <property type="glycosylation" value="4 sites, 1 O-linked glycan (4 sites)"/>
</dbReference>
<dbReference type="iPTMnet" id="Q9C0F1"/>
<dbReference type="PhosphoSitePlus" id="Q9C0F1"/>
<dbReference type="BioMuta" id="CEP44"/>
<dbReference type="DMDM" id="152032537"/>
<dbReference type="jPOST" id="Q9C0F1"/>
<dbReference type="MassIVE" id="Q9C0F1"/>
<dbReference type="PaxDb" id="9606-ENSP00000389427"/>
<dbReference type="PeptideAtlas" id="Q9C0F1"/>
<dbReference type="ProteomicsDB" id="80028">
    <molecule id="Q9C0F1-1"/>
</dbReference>
<dbReference type="ProteomicsDB" id="80029">
    <molecule id="Q9C0F1-2"/>
</dbReference>
<dbReference type="Pumba" id="Q9C0F1"/>
<dbReference type="Antibodypedia" id="50770">
    <property type="antibodies" value="109 antibodies from 22 providers"/>
</dbReference>
<dbReference type="DNASU" id="80817"/>
<dbReference type="Ensembl" id="ENST00000296519.6">
    <molecule id="Q9C0F1-1"/>
    <property type="protein sequence ID" value="ENSP00000296519.4"/>
    <property type="gene ID" value="ENSG00000164118.13"/>
</dbReference>
<dbReference type="Ensembl" id="ENST00000396791.7">
    <molecule id="Q9C0F1-1"/>
    <property type="protein sequence ID" value="ENSP00000380009.3"/>
    <property type="gene ID" value="ENSG00000164118.13"/>
</dbReference>
<dbReference type="Ensembl" id="ENST00000426172.3">
    <molecule id="Q9C0F1-2"/>
    <property type="protein sequence ID" value="ENSP00000408221.1"/>
    <property type="gene ID" value="ENSG00000164118.13"/>
</dbReference>
<dbReference type="Ensembl" id="ENST00000457424.6">
    <molecule id="Q9C0F1-2"/>
    <property type="protein sequence ID" value="ENSP00000389427.2"/>
    <property type="gene ID" value="ENSG00000164118.13"/>
</dbReference>
<dbReference type="Ensembl" id="ENST00000503780.6">
    <molecule id="Q9C0F1-1"/>
    <property type="protein sequence ID" value="ENSP00000423153.1"/>
    <property type="gene ID" value="ENSG00000164118.13"/>
</dbReference>
<dbReference type="GeneID" id="80817"/>
<dbReference type="KEGG" id="hsa:80817"/>
<dbReference type="MANE-Select" id="ENST00000503780.6">
    <property type="protein sequence ID" value="ENSP00000423153.1"/>
    <property type="RefSeq nucleotide sequence ID" value="NM_001040157.3"/>
    <property type="RefSeq protein sequence ID" value="NP_001035247.1"/>
</dbReference>
<dbReference type="UCSC" id="uc003itr.4">
    <molecule id="Q9C0F1-1"/>
    <property type="organism name" value="human"/>
</dbReference>
<dbReference type="AGR" id="HGNC:29356"/>
<dbReference type="CTD" id="80817"/>
<dbReference type="GeneCards" id="CEP44"/>
<dbReference type="HGNC" id="HGNC:29356">
    <property type="gene designation" value="CEP44"/>
</dbReference>
<dbReference type="HPA" id="ENSG00000164118">
    <property type="expression patterns" value="Low tissue specificity"/>
</dbReference>
<dbReference type="MIM" id="620217">
    <property type="type" value="gene"/>
</dbReference>
<dbReference type="neXtProt" id="NX_Q9C0F1"/>
<dbReference type="OpenTargets" id="ENSG00000164118"/>
<dbReference type="PharmGKB" id="PA134933992"/>
<dbReference type="VEuPathDB" id="HostDB:ENSG00000164118"/>
<dbReference type="eggNOG" id="ENOG502R3RQ">
    <property type="taxonomic scope" value="Eukaryota"/>
</dbReference>
<dbReference type="GeneTree" id="ENSGT00390000009873"/>
<dbReference type="HOGENOM" id="CLU_060541_0_0_1"/>
<dbReference type="InParanoid" id="Q9C0F1"/>
<dbReference type="OMA" id="NWMEDKL"/>
<dbReference type="OrthoDB" id="259598at2759"/>
<dbReference type="PAN-GO" id="Q9C0F1">
    <property type="GO annotations" value="2 GO annotations based on evolutionary models"/>
</dbReference>
<dbReference type="PhylomeDB" id="Q9C0F1"/>
<dbReference type="TreeFam" id="TF332994"/>
<dbReference type="PathwayCommons" id="Q9C0F1"/>
<dbReference type="SignaLink" id="Q9C0F1"/>
<dbReference type="BioGRID-ORCS" id="80817">
    <property type="hits" value="45 hits in 1156 CRISPR screens"/>
</dbReference>
<dbReference type="CD-CODE" id="8C2F96ED">
    <property type="entry name" value="Centrosome"/>
</dbReference>
<dbReference type="ChiTaRS" id="CEP44">
    <property type="organism name" value="human"/>
</dbReference>
<dbReference type="GenomeRNAi" id="80817"/>
<dbReference type="Pharos" id="Q9C0F1">
    <property type="development level" value="Tdark"/>
</dbReference>
<dbReference type="PRO" id="PR:Q9C0F1"/>
<dbReference type="Proteomes" id="UP000005640">
    <property type="component" value="Chromosome 4"/>
</dbReference>
<dbReference type="RNAct" id="Q9C0F1">
    <property type="molecule type" value="protein"/>
</dbReference>
<dbReference type="Bgee" id="ENSG00000164118">
    <property type="expression patterns" value="Expressed in bronchial epithelial cell and 179 other cell types or tissues"/>
</dbReference>
<dbReference type="ExpressionAtlas" id="Q9C0F1">
    <property type="expression patterns" value="baseline and differential"/>
</dbReference>
<dbReference type="GO" id="GO:0005814">
    <property type="term" value="C:centriole"/>
    <property type="evidence" value="ECO:0000314"/>
    <property type="project" value="UniProtKB"/>
</dbReference>
<dbReference type="GO" id="GO:0005813">
    <property type="term" value="C:centrosome"/>
    <property type="evidence" value="ECO:0000314"/>
    <property type="project" value="UniProtKB"/>
</dbReference>
<dbReference type="GO" id="GO:0036064">
    <property type="term" value="C:ciliary basal body"/>
    <property type="evidence" value="ECO:0000314"/>
    <property type="project" value="HPA"/>
</dbReference>
<dbReference type="GO" id="GO:0005829">
    <property type="term" value="C:cytosol"/>
    <property type="evidence" value="ECO:0000314"/>
    <property type="project" value="HPA"/>
</dbReference>
<dbReference type="GO" id="GO:0030496">
    <property type="term" value="C:midbody"/>
    <property type="evidence" value="ECO:0000304"/>
    <property type="project" value="UniProtKB"/>
</dbReference>
<dbReference type="GO" id="GO:0000922">
    <property type="term" value="C:spindle pole"/>
    <property type="evidence" value="ECO:0000314"/>
    <property type="project" value="UniProtKB"/>
</dbReference>
<dbReference type="GO" id="GO:0008017">
    <property type="term" value="F:microtubule binding"/>
    <property type="evidence" value="ECO:0000314"/>
    <property type="project" value="UniProtKB"/>
</dbReference>
<dbReference type="GO" id="GO:0007099">
    <property type="term" value="P:centriole replication"/>
    <property type="evidence" value="ECO:0000314"/>
    <property type="project" value="UniProtKB"/>
</dbReference>
<dbReference type="GO" id="GO:0010457">
    <property type="term" value="P:centriole-centriole cohesion"/>
    <property type="evidence" value="ECO:0000315"/>
    <property type="project" value="UniProtKB"/>
</dbReference>
<dbReference type="GO" id="GO:0007098">
    <property type="term" value="P:centrosome cycle"/>
    <property type="evidence" value="ECO:0000315"/>
    <property type="project" value="UniProtKB"/>
</dbReference>
<dbReference type="InterPro" id="IPR033603">
    <property type="entry name" value="CEP44"/>
</dbReference>
<dbReference type="InterPro" id="IPR029157">
    <property type="entry name" value="CEP44_CC"/>
</dbReference>
<dbReference type="PANTHER" id="PTHR31477">
    <property type="entry name" value="CENTROSOMAL PROTEIN OF 44 KDA"/>
    <property type="match status" value="1"/>
</dbReference>
<dbReference type="PANTHER" id="PTHR31477:SF1">
    <property type="entry name" value="CENTROSOMAL PROTEIN OF 44 KDA"/>
    <property type="match status" value="1"/>
</dbReference>
<dbReference type="Pfam" id="PF15007">
    <property type="entry name" value="CEP44"/>
    <property type="match status" value="1"/>
</dbReference>
<organism>
    <name type="scientific">Homo sapiens</name>
    <name type="common">Human</name>
    <dbReference type="NCBI Taxonomy" id="9606"/>
    <lineage>
        <taxon>Eukaryota</taxon>
        <taxon>Metazoa</taxon>
        <taxon>Chordata</taxon>
        <taxon>Craniata</taxon>
        <taxon>Vertebrata</taxon>
        <taxon>Euteleostomi</taxon>
        <taxon>Mammalia</taxon>
        <taxon>Eutheria</taxon>
        <taxon>Euarchontoglires</taxon>
        <taxon>Primates</taxon>
        <taxon>Haplorrhini</taxon>
        <taxon>Catarrhini</taxon>
        <taxon>Hominidae</taxon>
        <taxon>Homo</taxon>
    </lineage>
</organism>
<name>CEP44_HUMAN</name>
<comment type="function">
    <text evidence="6 7">Centriole-enriched microtubule-binding protein involved in centriole biogenesis. In collaboration with CEP295 and POC1B, is required for the centriole-to-centrosome conversion by ensuring the formation of bona fide centriole wall (PubMed:32060285). Functions as a linker component that maintains centrosome cohesion. Associates with CROCC and regulates its stability and localization to the centrosome (PubMed:31974111).</text>
</comment>
<comment type="subunit">
    <text evidence="6 7">Interacts with CROCC (PubMed:31974111). Interacts with POC1B; the interaction is direct and recruits POC1B to centriolar microtubules (PubMed:32060285). Binds to centriolar microtubules (PubMed:32060285).</text>
</comment>
<comment type="interaction">
    <interactant intactId="EBI-744115">
        <id>Q9C0F1</id>
    </interactant>
    <interactant intactId="EBI-11096309">
        <id>Q9NYB9-2</id>
        <label>ABI2</label>
    </interactant>
    <organismsDiffer>false</organismsDiffer>
    <experiments>3</experiments>
</comment>
<comment type="interaction">
    <interactant intactId="EBI-744115">
        <id>Q9C0F1</id>
    </interactant>
    <interactant intactId="EBI-742038">
        <id>Q9P2A4</id>
        <label>ABI3</label>
    </interactant>
    <organismsDiffer>false</organismsDiffer>
    <experiments>9</experiments>
</comment>
<comment type="interaction">
    <interactant intactId="EBI-744115">
        <id>Q9C0F1</id>
    </interactant>
    <interactant intactId="EBI-745213">
        <id>P29972</id>
        <label>AQP1</label>
    </interactant>
    <organismsDiffer>false</organismsDiffer>
    <experiments>3</experiments>
</comment>
<comment type="interaction">
    <interactant intactId="EBI-744115">
        <id>Q9C0F1</id>
    </interactant>
    <interactant intactId="EBI-10181188">
        <id>Q8N7W2-2</id>
        <label>BEND7</label>
    </interactant>
    <organismsDiffer>false</organismsDiffer>
    <experiments>3</experiments>
</comment>
<comment type="interaction">
    <interactant intactId="EBI-744115">
        <id>Q9C0F1</id>
    </interactant>
    <interactant intactId="EBI-10229433">
        <id>Q13515</id>
        <label>BFSP2</label>
    </interactant>
    <organismsDiffer>false</organismsDiffer>
    <experiments>4</experiments>
</comment>
<comment type="interaction">
    <interactant intactId="EBI-744115">
        <id>Q9C0F1</id>
    </interactant>
    <interactant intactId="EBI-465781">
        <id>Q9UL45</id>
        <label>BLOC1S6</label>
    </interactant>
    <organismsDiffer>false</organismsDiffer>
    <experiments>5</experiments>
</comment>
<comment type="interaction">
    <interactant intactId="EBI-744115">
        <id>Q9C0F1</id>
    </interactant>
    <interactant intactId="EBI-358049">
        <id>Q13895</id>
        <label>BYSL</label>
    </interactant>
    <organismsDiffer>false</organismsDiffer>
    <experiments>5</experiments>
</comment>
<comment type="interaction">
    <interactant intactId="EBI-744115">
        <id>Q9C0F1</id>
    </interactant>
    <interactant intactId="EBI-306905">
        <id>Q9Y376</id>
        <label>CAB39</label>
    </interactant>
    <organismsDiffer>false</organismsDiffer>
    <experiments>3</experiments>
</comment>
<comment type="interaction">
    <interactant intactId="EBI-744115">
        <id>Q9C0F1</id>
    </interactant>
    <interactant intactId="EBI-741724">
        <id>Q8NA61</id>
        <label>CBY2</label>
    </interactant>
    <organismsDiffer>false</organismsDiffer>
    <experiments>4</experiments>
</comment>
<comment type="interaction">
    <interactant intactId="EBI-744115">
        <id>Q9C0F1</id>
    </interactant>
    <interactant intactId="EBI-10749669">
        <id>Q8IYE0</id>
        <label>CCDC146</label>
    </interactant>
    <organismsDiffer>false</organismsDiffer>
    <experiments>3</experiments>
</comment>
<comment type="interaction">
    <interactant intactId="EBI-744115">
        <id>Q9C0F1</id>
    </interactant>
    <interactant intactId="EBI-10247802">
        <id>Q8IYE0-2</id>
        <label>CCDC146</label>
    </interactant>
    <organismsDiffer>false</organismsDiffer>
    <experiments>3</experiments>
</comment>
<comment type="interaction">
    <interactant intactId="EBI-744115">
        <id>Q9C0F1</id>
    </interactant>
    <interactant intactId="EBI-740814">
        <id>Q8N715</id>
        <label>CCDC185</label>
    </interactant>
    <organismsDiffer>false</organismsDiffer>
    <experiments>5</experiments>
</comment>
<comment type="interaction">
    <interactant intactId="EBI-744115">
        <id>Q9C0F1</id>
    </interactant>
    <interactant intactId="EBI-396137">
        <id>Q9UJX2</id>
        <label>CDC23</label>
    </interactant>
    <organismsDiffer>false</organismsDiffer>
    <experiments>3</experiments>
</comment>
<comment type="interaction">
    <interactant intactId="EBI-744115">
        <id>Q9C0F1</id>
    </interactant>
    <interactant intactId="EBI-10250303">
        <id>Q6IPU0</id>
        <label>CENPP</label>
    </interactant>
    <organismsDiffer>false</organismsDiffer>
    <experiments>5</experiments>
</comment>
<comment type="interaction">
    <interactant intactId="EBI-744115">
        <id>Q9C0F1</id>
    </interactant>
    <interactant intactId="EBI-10181988">
        <id>Q8IYX8-2</id>
        <label>CEP57L1</label>
    </interactant>
    <organismsDiffer>false</organismsDiffer>
    <experiments>3</experiments>
</comment>
<comment type="interaction">
    <interactant intactId="EBI-744115">
        <id>Q9C0F1</id>
    </interactant>
    <interactant intactId="EBI-741528">
        <id>Q9UKJ5</id>
        <label>CHIC2</label>
    </interactant>
    <organismsDiffer>false</organismsDiffer>
    <experiments>3</experiments>
</comment>
<comment type="interaction">
    <interactant intactId="EBI-744115">
        <id>Q9C0F1</id>
    </interactant>
    <interactant intactId="EBI-715074">
        <id>Q13561</id>
        <label>DCTN2</label>
    </interactant>
    <organismsDiffer>false</organismsDiffer>
    <experiments>4</experiments>
</comment>
<comment type="interaction">
    <interactant intactId="EBI-744115">
        <id>Q9C0F1</id>
    </interactant>
    <interactant intactId="EBI-1051531">
        <id>Q6P158</id>
        <label>DHX57</label>
    </interactant>
    <organismsDiffer>false</organismsDiffer>
    <experiments>3</experiments>
</comment>
<comment type="interaction">
    <interactant intactId="EBI-744115">
        <id>Q9C0F1</id>
    </interactant>
    <interactant intactId="EBI-2564275">
        <id>Q14689</id>
        <label>DIP2A</label>
    </interactant>
    <organismsDiffer>false</organismsDiffer>
    <experiments>3</experiments>
</comment>
<comment type="interaction">
    <interactant intactId="EBI-744115">
        <id>Q9C0F1</id>
    </interactant>
    <interactant intactId="EBI-6393536">
        <id>O75616</id>
        <label>ERAL1</label>
    </interactant>
    <organismsDiffer>false</organismsDiffer>
    <experiments>3</experiments>
</comment>
<comment type="interaction">
    <interactant intactId="EBI-744115">
        <id>Q9C0F1</id>
    </interactant>
    <interactant intactId="EBI-719941">
        <id>Q3B820</id>
        <label>FAM161A</label>
    </interactant>
    <organismsDiffer>false</organismsDiffer>
    <experiments>3</experiments>
</comment>
<comment type="interaction">
    <interactant intactId="EBI-744115">
        <id>Q9C0F1</id>
    </interactant>
    <interactant intactId="EBI-740459">
        <id>P51116</id>
        <label>FXR2</label>
    </interactant>
    <organismsDiffer>false</organismsDiffer>
    <experiments>3</experiments>
</comment>
<comment type="interaction">
    <interactant intactId="EBI-744115">
        <id>Q9C0F1</id>
    </interactant>
    <interactant intactId="EBI-720198">
        <id>P61952</id>
        <label>GNG11</label>
    </interactant>
    <organismsDiffer>false</organismsDiffer>
    <experiments>3</experiments>
</comment>
<comment type="interaction">
    <interactant intactId="EBI-744115">
        <id>Q9C0F1</id>
    </interactant>
    <interactant intactId="EBI-10243023">
        <id>Q53Y01</id>
        <label>GNG11</label>
    </interactant>
    <organismsDiffer>false</organismsDiffer>
    <experiments>3</experiments>
</comment>
<comment type="interaction">
    <interactant intactId="EBI-744115">
        <id>Q9C0F1</id>
    </interactant>
    <interactant intactId="EBI-6447217">
        <id>O75409</id>
        <label>H2AP</label>
    </interactant>
    <organismsDiffer>false</organismsDiffer>
    <experiments>6</experiments>
</comment>
<comment type="interaction">
    <interactant intactId="EBI-744115">
        <id>Q9C0F1</id>
    </interactant>
    <interactant intactId="EBI-2514791">
        <id>Q96CS2</id>
        <label>HAUS1</label>
    </interactant>
    <organismsDiffer>false</organismsDiffer>
    <experiments>4</experiments>
</comment>
<comment type="interaction">
    <interactant intactId="EBI-744115">
        <id>Q9C0F1</id>
    </interactant>
    <interactant intactId="EBI-488533">
        <id>Q8WYH8</id>
        <label>ING5</label>
    </interactant>
    <organismsDiffer>false</organismsDiffer>
    <experiments>3</experiments>
</comment>
<comment type="interaction">
    <interactant intactId="EBI-744115">
        <id>Q9C0F1</id>
    </interactant>
    <interactant intactId="EBI-12401561">
        <id>Q6ICG6-3</id>
        <label>KIAA0930</label>
    </interactant>
    <organismsDiffer>false</organismsDiffer>
    <experiments>3</experiments>
</comment>
<comment type="interaction">
    <interactant intactId="EBI-744115">
        <id>Q9C0F1</id>
    </interactant>
    <interactant intactId="EBI-8639312">
        <id>P25800</id>
        <label>LMO1</label>
    </interactant>
    <organismsDiffer>false</organismsDiffer>
    <experiments>3</experiments>
</comment>
<comment type="interaction">
    <interactant intactId="EBI-744115">
        <id>Q9C0F1</id>
    </interactant>
    <interactant intactId="EBI-10240044">
        <id>Q32MZ4-4</id>
        <label>LRRFIP1</label>
    </interactant>
    <organismsDiffer>false</organismsDiffer>
    <experiments>3</experiments>
</comment>
<comment type="interaction">
    <interactant intactId="EBI-744115">
        <id>Q9C0F1</id>
    </interactant>
    <interactant intactId="EBI-713568">
        <id>P45984</id>
        <label>MAPK9</label>
    </interactant>
    <organismsDiffer>false</organismsDiffer>
    <experiments>9</experiments>
</comment>
<comment type="interaction">
    <interactant intactId="EBI-744115">
        <id>Q9C0F1</id>
    </interactant>
    <interactant intactId="EBI-348259">
        <id>Q96EZ8</id>
        <label>MCRS1</label>
    </interactant>
    <organismsDiffer>false</organismsDiffer>
    <experiments>6</experiments>
</comment>
<comment type="interaction">
    <interactant intactId="EBI-744115">
        <id>Q9C0F1</id>
    </interactant>
    <interactant intactId="EBI-10270788">
        <id>Q8NEQ2</id>
        <label>MGC24125</label>
    </interactant>
    <organismsDiffer>false</organismsDiffer>
    <experiments>3</experiments>
</comment>
<comment type="interaction">
    <interactant intactId="EBI-744115">
        <id>Q9C0F1</id>
    </interactant>
    <interactant intactId="EBI-5773143">
        <id>Q6P2C6</id>
        <label>MLLT6</label>
    </interactant>
    <organismsDiffer>false</organismsDiffer>
    <experiments>3</experiments>
</comment>
<comment type="interaction">
    <interactant intactId="EBI-744115">
        <id>Q9C0F1</id>
    </interactant>
    <interactant intactId="EBI-748896">
        <id>Q96HT8</id>
        <label>MRFAP1L1</label>
    </interactant>
    <organismsDiffer>false</organismsDiffer>
    <experiments>3</experiments>
</comment>
<comment type="interaction">
    <interactant intactId="EBI-744115">
        <id>Q9C0F1</id>
    </interactant>
    <interactant intactId="EBI-747693">
        <id>P41227</id>
        <label>NAA10</label>
    </interactant>
    <organismsDiffer>false</organismsDiffer>
    <experiments>3</experiments>
</comment>
<comment type="interaction">
    <interactant intactId="EBI-744115">
        <id>Q9C0F1</id>
    </interactant>
    <interactant intactId="EBI-742388">
        <id>Q9H8W4</id>
        <label>PLEKHF2</label>
    </interactant>
    <organismsDiffer>false</organismsDiffer>
    <experiments>3</experiments>
</comment>
<comment type="interaction">
    <interactant intactId="EBI-744115">
        <id>Q9C0F1</id>
    </interactant>
    <interactant intactId="EBI-5452779">
        <id>Q9BUI4</id>
        <label>POLR3C</label>
    </interactant>
    <organismsDiffer>false</organismsDiffer>
    <experiments>3</experiments>
</comment>
<comment type="interaction">
    <interactant intactId="EBI-744115">
        <id>Q9C0F1</id>
    </interactant>
    <interactant intactId="EBI-366525">
        <id>Q969H6</id>
        <label>POP5</label>
    </interactant>
    <organismsDiffer>false</organismsDiffer>
    <experiments>6</experiments>
</comment>
<comment type="interaction">
    <interactant intactId="EBI-744115">
        <id>Q9C0F1</id>
    </interactant>
    <interactant intactId="EBI-357622">
        <id>O43242</id>
        <label>PSMD3</label>
    </interactant>
    <organismsDiffer>false</organismsDiffer>
    <experiments>3</experiments>
</comment>
<comment type="interaction">
    <interactant intactId="EBI-744115">
        <id>Q9C0F1</id>
    </interactant>
    <interactant intactId="EBI-2514922">
        <id>Q96T37</id>
        <label>RBM15</label>
    </interactant>
    <organismsDiffer>false</organismsDiffer>
    <experiments>3</experiments>
</comment>
<comment type="interaction">
    <interactant intactId="EBI-744115">
        <id>Q9C0F1</id>
    </interactant>
    <interactant intactId="EBI-373337">
        <id>O76064</id>
        <label>RNF8</label>
    </interactant>
    <organismsDiffer>false</organismsDiffer>
    <experiments>4</experiments>
</comment>
<comment type="interaction">
    <interactant intactId="EBI-744115">
        <id>Q9C0F1</id>
    </interactant>
    <interactant intactId="EBI-748391">
        <id>Q9BWG6</id>
        <label>SCNM1</label>
    </interactant>
    <organismsDiffer>false</organismsDiffer>
    <experiments>3</experiments>
</comment>
<comment type="interaction">
    <interactant intactId="EBI-744115">
        <id>Q9C0F1</id>
    </interactant>
    <interactant intactId="EBI-710310">
        <id>Q15560</id>
        <label>TCEA2</label>
    </interactant>
    <organismsDiffer>false</organismsDiffer>
    <experiments>3</experiments>
</comment>
<comment type="interaction">
    <interactant intactId="EBI-744115">
        <id>Q9C0F1</id>
    </interactant>
    <interactant intactId="EBI-725997">
        <id>Q8WV44</id>
        <label>TRIM41</label>
    </interactant>
    <organismsDiffer>false</organismsDiffer>
    <experiments>3</experiments>
</comment>
<comment type="interaction">
    <interactant intactId="EBI-744115">
        <id>Q9C0F1</id>
    </interactant>
    <interactant intactId="EBI-744794">
        <id>Q9BZW7</id>
        <label>TSGA10</label>
    </interactant>
    <organismsDiffer>false</organismsDiffer>
    <experiments>6</experiments>
</comment>
<comment type="interaction">
    <interactant intactId="EBI-744115">
        <id>Q9C0F1</id>
    </interactant>
    <interactant intactId="EBI-359793">
        <id>P40222</id>
        <label>TXLNA</label>
    </interactant>
    <organismsDiffer>false</organismsDiffer>
    <experiments>6</experiments>
</comment>
<comment type="interaction">
    <interactant intactId="EBI-744115">
        <id>Q9C0F1</id>
    </interactant>
    <interactant intactId="EBI-8656416">
        <id>Q68DK2-5</id>
        <label>ZFYVE26</label>
    </interactant>
    <organismsDiffer>false</organismsDiffer>
    <experiments>6</experiments>
</comment>
<comment type="interaction">
    <interactant intactId="EBI-744115">
        <id>Q9C0F1</id>
    </interactant>
    <interactant intactId="EBI-740727">
        <id>Q8TAU3</id>
        <label>ZNF417</label>
    </interactant>
    <organismsDiffer>false</organismsDiffer>
    <experiments>4</experiments>
</comment>
<comment type="interaction">
    <interactant intactId="EBI-744115">
        <id>Q9C0F1</id>
    </interactant>
    <interactant intactId="EBI-6427977">
        <id>Q96SQ5</id>
        <label>ZNF587</label>
    </interactant>
    <organismsDiffer>false</organismsDiffer>
    <experiments>6</experiments>
</comment>
<comment type="interaction">
    <interactant intactId="EBI-744115">
        <id>Q9C0F1</id>
    </interactant>
    <interactant intactId="EBI-16429014">
        <id>A0A0S2Z5X4</id>
        <label>ZNF688</label>
    </interactant>
    <organismsDiffer>false</organismsDiffer>
    <experiments>3</experiments>
</comment>
<comment type="subcellular location">
    <subcellularLocation>
        <location evidence="5 6">Cytoplasm</location>
        <location evidence="5 6">Cytoskeleton</location>
        <location evidence="5 6">Microtubule organizing center</location>
        <location evidence="5 6">Centrosome</location>
    </subcellularLocation>
    <subcellularLocation>
        <location evidence="6 7">Cytoplasm</location>
        <location evidence="6 7">Cytoskeleton</location>
        <location evidence="6 7">Microtubule organizing center</location>
        <location evidence="6 7">Centrosome</location>
        <location evidence="6 7">Centriole</location>
    </subcellularLocation>
    <subcellularLocation>
        <location evidence="5">Cytoplasm</location>
        <location evidence="5">Cytoskeleton</location>
        <location evidence="5">Spindle pole</location>
    </subcellularLocation>
    <subcellularLocation>
        <location evidence="5">Midbody</location>
    </subcellularLocation>
    <text evidence="6 7">Localizes to the proximal end of mother and daughter centrioles.</text>
</comment>
<comment type="alternative products">
    <event type="alternative splicing"/>
    <isoform>
        <id>Q9C0F1-1</id>
        <name>1</name>
        <sequence type="displayed"/>
    </isoform>
    <isoform>
        <id>Q9C0F1-2</id>
        <name>2</name>
        <sequence type="described" ref="VSP_041378"/>
    </isoform>
</comment>
<comment type="developmental stage">
    <text evidence="6">Moderate expression in G0 and G1, increasing in S and G2, and dropping in prophase, metaphase and anaphase (at protein level).</text>
</comment>
<comment type="sequence caution" evidence="9">
    <conflict type="erroneous initiation">
        <sequence resource="EMBL-CDS" id="BAB21803"/>
    </conflict>
    <text>Extended N-terminus.</text>
</comment>
<protein>
    <recommendedName>
        <fullName>Centrosomal protein of 44 kDa</fullName>
        <shortName>Cep44</shortName>
    </recommendedName>
    <alternativeName>
        <fullName>HBV PreS1-transactivated protein 3</fullName>
        <shortName>PS1TP3</shortName>
    </alternativeName>
</protein>